<proteinExistence type="evidence at protein level"/>
<organism>
    <name type="scientific">Homo sapiens</name>
    <name type="common">Human</name>
    <dbReference type="NCBI Taxonomy" id="9606"/>
    <lineage>
        <taxon>Eukaryota</taxon>
        <taxon>Metazoa</taxon>
        <taxon>Chordata</taxon>
        <taxon>Craniata</taxon>
        <taxon>Vertebrata</taxon>
        <taxon>Euteleostomi</taxon>
        <taxon>Mammalia</taxon>
        <taxon>Eutheria</taxon>
        <taxon>Euarchontoglires</taxon>
        <taxon>Primates</taxon>
        <taxon>Haplorrhini</taxon>
        <taxon>Catarrhini</taxon>
        <taxon>Hominidae</taxon>
        <taxon>Homo</taxon>
    </lineage>
</organism>
<protein>
    <recommendedName>
        <fullName>Calcipressin-1</fullName>
    </recommendedName>
    <alternativeName>
        <fullName>Adapt78</fullName>
    </alternativeName>
    <alternativeName>
        <fullName>Down syndrome critical region protein 1</fullName>
    </alternativeName>
    <alternativeName>
        <fullName>Myocyte-enriched calcineurin-interacting protein 1</fullName>
        <shortName>MCIP1</shortName>
    </alternativeName>
    <alternativeName>
        <fullName>Regulator of calcineurin 1</fullName>
    </alternativeName>
</protein>
<gene>
    <name type="primary">RCAN1</name>
    <name type="synonym">ADAPT78</name>
    <name type="synonym">CSP1</name>
    <name type="synonym">DSC1</name>
    <name type="synonym">DSCR1</name>
</gene>
<comment type="function">
    <text evidence="1 3">Inhibits calcineurin-dependent transcriptional responses by binding to the catalytic domain of calcineurin A (PubMed:12809556). Could play a role during central nervous system development (By similarity).</text>
</comment>
<comment type="subunit">
    <text evidence="3 4">Interacts with RAF1 (PubMed:15935327). Interacts with PPP3CA and PPP3R1 (PubMed:12809556).</text>
</comment>
<comment type="interaction">
    <interactant intactId="EBI-1541887">
        <id>P53805</id>
    </interactant>
    <interactant intactId="EBI-1759540">
        <id>P16298</id>
        <label>PPP3CB</label>
    </interactant>
    <organismsDiffer>false</organismsDiffer>
    <experiments>3</experiments>
</comment>
<comment type="interaction">
    <interactant intactId="EBI-1541887">
        <id>P53805</id>
    </interactant>
    <interactant intactId="EBI-915984">
        <id>P63098</id>
        <label>PPP3R1</label>
    </interactant>
    <organismsDiffer>false</organismsDiffer>
    <experiments>3</experiments>
</comment>
<comment type="interaction">
    <interactant intactId="EBI-1541912">
        <id>P53805-2</id>
    </interactant>
    <interactant intactId="EBI-365996">
        <id>P04049</id>
        <label>RAF1</label>
    </interactant>
    <organismsDiffer>false</organismsDiffer>
    <experiments>4</experiments>
</comment>
<comment type="interaction">
    <interactant intactId="EBI-1541912">
        <id>P53805-2</id>
    </interactant>
    <interactant intactId="EBI-1541912">
        <id>P53805-2</id>
        <label>RCAN1</label>
    </interactant>
    <organismsDiffer>false</organismsDiffer>
    <experiments>6</experiments>
</comment>
<comment type="interaction">
    <interactant intactId="EBI-1541912">
        <id>P53805-2</id>
    </interactant>
    <interactant intactId="EBI-80344">
        <id>Q61214</id>
        <label>Dyrk1a</label>
    </interactant>
    <organismsDiffer>true</organismsDiffer>
    <experiments>5</experiments>
</comment>
<comment type="alternative products">
    <event type="alternative splicing"/>
    <isoform>
        <id>P53805-1</id>
        <name>1</name>
        <name evidence="5">CALP1-L</name>
        <sequence type="displayed"/>
    </isoform>
    <isoform>
        <id>P53805-2</id>
        <name>2</name>
        <name evidence="5">CALP1-S</name>
        <sequence type="described" ref="VSP_001314"/>
    </isoform>
    <isoform>
        <id>P53805-3</id>
        <name>3</name>
        <sequence type="described" ref="VSP_001315"/>
    </isoform>
    <isoform>
        <id>P53805-4</id>
        <name>4</name>
        <sequence type="described" ref="VSP_001316"/>
    </isoform>
</comment>
<comment type="tissue specificity">
    <text>Highly expressed heart, brain and skeletal muscle. Also expressed in all other tissues.</text>
</comment>
<comment type="induction">
    <text>By calcium.</text>
</comment>
<comment type="PTM">
    <text evidence="3">Phosphorylation increases its ability to inhibit calcineurin and decreases protein half-life.</text>
</comment>
<comment type="similarity">
    <text evidence="10">Belongs to the RCAN family.</text>
</comment>
<keyword id="KW-0002">3D-structure</keyword>
<keyword id="KW-0025">Alternative splicing</keyword>
<keyword id="KW-0597">Phosphoprotein</keyword>
<keyword id="KW-1267">Proteomics identification</keyword>
<keyword id="KW-1185">Reference proteome</keyword>
<dbReference type="EMBL" id="U28833">
    <property type="protein sequence ID" value="AAB81557.1"/>
    <property type="molecule type" value="mRNA"/>
</dbReference>
<dbReference type="EMBL" id="U85265">
    <property type="protein sequence ID" value="AAB84370.1"/>
    <property type="molecule type" value="mRNA"/>
</dbReference>
<dbReference type="EMBL" id="U85266">
    <property type="protein sequence ID" value="AAB84371.2"/>
    <property type="molecule type" value="mRNA"/>
</dbReference>
<dbReference type="EMBL" id="U85267">
    <property type="protein sequence ID" value="AAB84372.1"/>
    <property type="molecule type" value="mRNA"/>
</dbReference>
<dbReference type="EMBL" id="AY325903">
    <property type="protein sequence ID" value="AAP96743.1"/>
    <property type="molecule type" value="mRNA"/>
</dbReference>
<dbReference type="EMBL" id="AF400429">
    <property type="protein sequence ID" value="AAK92478.1"/>
    <property type="molecule type" value="mRNA"/>
</dbReference>
<dbReference type="EMBL" id="AK092184">
    <property type="protein sequence ID" value="BAG52494.1"/>
    <property type="molecule type" value="mRNA"/>
</dbReference>
<dbReference type="EMBL" id="CR456878">
    <property type="protein sequence ID" value="CAG33159.1"/>
    <property type="molecule type" value="mRNA"/>
</dbReference>
<dbReference type="EMBL" id="AP000326">
    <property type="status" value="NOT_ANNOTATED_CDS"/>
    <property type="molecule type" value="Genomic_DNA"/>
</dbReference>
<dbReference type="EMBL" id="AP000327">
    <property type="status" value="NOT_ANNOTATED_CDS"/>
    <property type="molecule type" value="Genomic_DNA"/>
</dbReference>
<dbReference type="EMBL" id="CH471079">
    <property type="protein sequence ID" value="EAX09779.1"/>
    <property type="molecule type" value="Genomic_DNA"/>
</dbReference>
<dbReference type="EMBL" id="CH471079">
    <property type="protein sequence ID" value="EAX09782.1"/>
    <property type="molecule type" value="Genomic_DNA"/>
</dbReference>
<dbReference type="EMBL" id="U53821">
    <property type="protein sequence ID" value="AAF21218.1"/>
    <property type="molecule type" value="Genomic_DNA"/>
</dbReference>
<dbReference type="EMBL" id="BC002864">
    <property type="protein sequence ID" value="AAH02864.1"/>
    <property type="molecule type" value="mRNA"/>
</dbReference>
<dbReference type="EMBL" id="BT007363">
    <property type="protein sequence ID" value="AAP36027.1"/>
    <property type="molecule type" value="mRNA"/>
</dbReference>
<dbReference type="CCDS" id="CCDS13637.1">
    <molecule id="P53805-1"/>
</dbReference>
<dbReference type="CCDS" id="CCDS33551.1">
    <molecule id="P53805-2"/>
</dbReference>
<dbReference type="CCDS" id="CCDS42921.1">
    <molecule id="P53805-4"/>
</dbReference>
<dbReference type="CCDS" id="CCDS74790.1">
    <molecule id="P53805-3"/>
</dbReference>
<dbReference type="RefSeq" id="NP_001272318.1">
    <molecule id="P53805-3"/>
    <property type="nucleotide sequence ID" value="NM_001285389.2"/>
</dbReference>
<dbReference type="RefSeq" id="NP_001272320.2">
    <property type="nucleotide sequence ID" value="NM_001285391.2"/>
</dbReference>
<dbReference type="RefSeq" id="NP_001272321.1">
    <molecule id="P53805-4"/>
    <property type="nucleotide sequence ID" value="NM_001285392.2"/>
</dbReference>
<dbReference type="RefSeq" id="NP_001272322.1">
    <molecule id="P53805-4"/>
    <property type="nucleotide sequence ID" value="NM_001285393.2"/>
</dbReference>
<dbReference type="RefSeq" id="NP_004405.3">
    <molecule id="P53805-1"/>
    <property type="nucleotide sequence ID" value="NM_004414.6"/>
</dbReference>
<dbReference type="RefSeq" id="NP_981962.1">
    <molecule id="P53805-4"/>
    <property type="nucleotide sequence ID" value="NM_203417.2"/>
</dbReference>
<dbReference type="RefSeq" id="NP_981963.1">
    <molecule id="P53805-2"/>
    <property type="nucleotide sequence ID" value="NM_203418.3"/>
</dbReference>
<dbReference type="PDB" id="6UUQ">
    <property type="method" value="X-ray"/>
    <property type="resolution" value="1.85 A"/>
    <property type="chains" value="B=183-219"/>
</dbReference>
<dbReference type="PDBsum" id="6UUQ"/>
<dbReference type="SMR" id="P53805"/>
<dbReference type="BioGRID" id="108161">
    <property type="interactions" value="49"/>
</dbReference>
<dbReference type="CORUM" id="P53805"/>
<dbReference type="FunCoup" id="P53805">
    <property type="interactions" value="2214"/>
</dbReference>
<dbReference type="IntAct" id="P53805">
    <property type="interactions" value="46"/>
</dbReference>
<dbReference type="MINT" id="P53805"/>
<dbReference type="STRING" id="9606.ENSP00000370527"/>
<dbReference type="DrugBank" id="DB00975">
    <property type="generic name" value="Dipyridamole"/>
</dbReference>
<dbReference type="iPTMnet" id="P53805"/>
<dbReference type="PhosphoSitePlus" id="P53805"/>
<dbReference type="BioMuta" id="RCAN1"/>
<dbReference type="DMDM" id="215274235"/>
<dbReference type="jPOST" id="P53805"/>
<dbReference type="MassIVE" id="P53805"/>
<dbReference type="PaxDb" id="9606-ENSP00000370527"/>
<dbReference type="PeptideAtlas" id="P53805"/>
<dbReference type="ProteomicsDB" id="56626">
    <molecule id="P53805-1"/>
</dbReference>
<dbReference type="ProteomicsDB" id="56627">
    <molecule id="P53805-2"/>
</dbReference>
<dbReference type="ProteomicsDB" id="56628">
    <molecule id="P53805-3"/>
</dbReference>
<dbReference type="ProteomicsDB" id="56629">
    <molecule id="P53805-4"/>
</dbReference>
<dbReference type="Pumba" id="P53805"/>
<dbReference type="Antibodypedia" id="22959">
    <property type="antibodies" value="575 antibodies from 35 providers"/>
</dbReference>
<dbReference type="DNASU" id="1827"/>
<dbReference type="Ensembl" id="ENST00000313806.9">
    <molecule id="P53805-1"/>
    <property type="protein sequence ID" value="ENSP00000320768.4"/>
    <property type="gene ID" value="ENSG00000159200.18"/>
</dbReference>
<dbReference type="Ensembl" id="ENST00000381132.6">
    <molecule id="P53805-2"/>
    <property type="protein sequence ID" value="ENSP00000370524.2"/>
    <property type="gene ID" value="ENSG00000159200.18"/>
</dbReference>
<dbReference type="Ensembl" id="ENST00000399272.5">
    <molecule id="P53805-3"/>
    <property type="protein sequence ID" value="ENSP00000382214.1"/>
    <property type="gene ID" value="ENSG00000159200.18"/>
</dbReference>
<dbReference type="Ensembl" id="ENST00000443408.6">
    <molecule id="P53805-4"/>
    <property type="protein sequence ID" value="ENSP00000392438.2"/>
    <property type="gene ID" value="ENSG00000159200.18"/>
</dbReference>
<dbReference type="Ensembl" id="ENST00000482533.5">
    <molecule id="P53805-4"/>
    <property type="protein sequence ID" value="ENSP00000419624.1"/>
    <property type="gene ID" value="ENSG00000159200.18"/>
</dbReference>
<dbReference type="Ensembl" id="ENST00000487990.5">
    <molecule id="P53805-4"/>
    <property type="protein sequence ID" value="ENSP00000419252.1"/>
    <property type="gene ID" value="ENSG00000159200.18"/>
</dbReference>
<dbReference type="Ensembl" id="ENST00000620920.4">
    <molecule id="P53805-4"/>
    <property type="protein sequence ID" value="ENSP00000477646.1"/>
    <property type="gene ID" value="ENSG00000159200.18"/>
</dbReference>
<dbReference type="GeneID" id="1827"/>
<dbReference type="KEGG" id="hsa:1827"/>
<dbReference type="MANE-Select" id="ENST00000313806.9">
    <property type="protein sequence ID" value="ENSP00000320768.4"/>
    <property type="RefSeq nucleotide sequence ID" value="NM_004414.7"/>
    <property type="RefSeq protein sequence ID" value="NP_004405.3"/>
</dbReference>
<dbReference type="UCSC" id="uc002yuc.5">
    <molecule id="P53805-1"/>
    <property type="organism name" value="human"/>
</dbReference>
<dbReference type="AGR" id="HGNC:3040"/>
<dbReference type="CTD" id="1827"/>
<dbReference type="DisGeNET" id="1827"/>
<dbReference type="GeneCards" id="RCAN1"/>
<dbReference type="HGNC" id="HGNC:3040">
    <property type="gene designation" value="RCAN1"/>
</dbReference>
<dbReference type="HPA" id="ENSG00000159200">
    <property type="expression patterns" value="Tissue enhanced (liver, parathyroid gland)"/>
</dbReference>
<dbReference type="MIM" id="602917">
    <property type="type" value="gene"/>
</dbReference>
<dbReference type="neXtProt" id="NX_P53805"/>
<dbReference type="OpenTargets" id="ENSG00000159200"/>
<dbReference type="PharmGKB" id="PA162400946"/>
<dbReference type="VEuPathDB" id="HostDB:ENSG00000159200"/>
<dbReference type="eggNOG" id="KOG4019">
    <property type="taxonomic scope" value="Eukaryota"/>
</dbReference>
<dbReference type="GeneTree" id="ENSGT00940000159870"/>
<dbReference type="HOGENOM" id="CLU_2215801_0_0_1"/>
<dbReference type="InParanoid" id="P53805"/>
<dbReference type="OMA" id="RIMQTRC"/>
<dbReference type="OrthoDB" id="17212at2759"/>
<dbReference type="PAN-GO" id="P53805">
    <property type="GO annotations" value="4 GO annotations based on evolutionary models"/>
</dbReference>
<dbReference type="PhylomeDB" id="P53805"/>
<dbReference type="TreeFam" id="TF313579"/>
<dbReference type="PathwayCommons" id="P53805"/>
<dbReference type="SignaLink" id="P53805"/>
<dbReference type="SIGNOR" id="P53805"/>
<dbReference type="BioGRID-ORCS" id="1827">
    <property type="hits" value="11 hits in 1161 CRISPR screens"/>
</dbReference>
<dbReference type="ChiTaRS" id="RCAN1">
    <property type="organism name" value="human"/>
</dbReference>
<dbReference type="GeneWiki" id="DSCR1"/>
<dbReference type="GenomeRNAi" id="1827"/>
<dbReference type="Pharos" id="P53805">
    <property type="development level" value="Tbio"/>
</dbReference>
<dbReference type="PRO" id="PR:P53805"/>
<dbReference type="Proteomes" id="UP000005640">
    <property type="component" value="Chromosome 21"/>
</dbReference>
<dbReference type="RNAct" id="P53805">
    <property type="molecule type" value="protein"/>
</dbReference>
<dbReference type="Bgee" id="ENSG00000159200">
    <property type="expression patterns" value="Expressed in cortical plate and 211 other cell types or tissues"/>
</dbReference>
<dbReference type="ExpressionAtlas" id="P53805">
    <property type="expression patterns" value="baseline and differential"/>
</dbReference>
<dbReference type="GO" id="GO:0005737">
    <property type="term" value="C:cytoplasm"/>
    <property type="evidence" value="ECO:0000318"/>
    <property type="project" value="GO_Central"/>
</dbReference>
<dbReference type="GO" id="GO:0005634">
    <property type="term" value="C:nucleus"/>
    <property type="evidence" value="ECO:0000318"/>
    <property type="project" value="GO_Central"/>
</dbReference>
<dbReference type="GO" id="GO:0008597">
    <property type="term" value="F:calcium-dependent protein serine/threonine phosphatase regulator activity"/>
    <property type="evidence" value="ECO:0000318"/>
    <property type="project" value="GO_Central"/>
</dbReference>
<dbReference type="GO" id="GO:0042802">
    <property type="term" value="F:identical protein binding"/>
    <property type="evidence" value="ECO:0000353"/>
    <property type="project" value="IntAct"/>
</dbReference>
<dbReference type="GO" id="GO:0003676">
    <property type="term" value="F:nucleic acid binding"/>
    <property type="evidence" value="ECO:0007669"/>
    <property type="project" value="InterPro"/>
</dbReference>
<dbReference type="GO" id="GO:0004864">
    <property type="term" value="F:protein phosphatase inhibitor activity"/>
    <property type="evidence" value="ECO:0007669"/>
    <property type="project" value="Ensembl"/>
</dbReference>
<dbReference type="GO" id="GO:0033173">
    <property type="term" value="P:calcineurin-NFAT signaling cascade"/>
    <property type="evidence" value="ECO:0007669"/>
    <property type="project" value="Ensembl"/>
</dbReference>
<dbReference type="GO" id="GO:0019722">
    <property type="term" value="P:calcium-mediated signaling"/>
    <property type="evidence" value="ECO:0000318"/>
    <property type="project" value="GO_Central"/>
</dbReference>
<dbReference type="GO" id="GO:0031987">
    <property type="term" value="P:locomotion involved in locomotory behavior"/>
    <property type="evidence" value="ECO:0007669"/>
    <property type="project" value="Ensembl"/>
</dbReference>
<dbReference type="GO" id="GO:0070885">
    <property type="term" value="P:negative regulation of calcineurin-NFAT signaling cascade"/>
    <property type="evidence" value="ECO:0000315"/>
    <property type="project" value="UniProtKB"/>
</dbReference>
<dbReference type="GO" id="GO:0051151">
    <property type="term" value="P:negative regulation of smooth muscle cell differentiation"/>
    <property type="evidence" value="ECO:0007669"/>
    <property type="project" value="Ensembl"/>
</dbReference>
<dbReference type="GO" id="GO:0043627">
    <property type="term" value="P:response to estrogen"/>
    <property type="evidence" value="ECO:0007669"/>
    <property type="project" value="Ensembl"/>
</dbReference>
<dbReference type="GO" id="GO:0002931">
    <property type="term" value="P:response to ischemia"/>
    <property type="evidence" value="ECO:0007669"/>
    <property type="project" value="Ensembl"/>
</dbReference>
<dbReference type="GO" id="GO:0009612">
    <property type="term" value="P:response to mechanical stimulus"/>
    <property type="evidence" value="ECO:0007669"/>
    <property type="project" value="Ensembl"/>
</dbReference>
<dbReference type="GO" id="GO:0006979">
    <property type="term" value="P:response to oxidative stress"/>
    <property type="evidence" value="ECO:0007669"/>
    <property type="project" value="Ensembl"/>
</dbReference>
<dbReference type="GO" id="GO:0007614">
    <property type="term" value="P:short-term memory"/>
    <property type="evidence" value="ECO:0007669"/>
    <property type="project" value="Ensembl"/>
</dbReference>
<dbReference type="GO" id="GO:0048741">
    <property type="term" value="P:skeletal muscle fiber development"/>
    <property type="evidence" value="ECO:0007669"/>
    <property type="project" value="Ensembl"/>
</dbReference>
<dbReference type="CDD" id="cd12708">
    <property type="entry name" value="RRM_RCAN1"/>
    <property type="match status" value="1"/>
</dbReference>
<dbReference type="FunFam" id="3.30.70.330:FF:000221">
    <property type="entry name" value="calcipressin-1 isoform X1"/>
    <property type="match status" value="1"/>
</dbReference>
<dbReference type="Gene3D" id="3.30.70.330">
    <property type="match status" value="1"/>
</dbReference>
<dbReference type="InterPro" id="IPR006931">
    <property type="entry name" value="Calcipressin"/>
</dbReference>
<dbReference type="InterPro" id="IPR012677">
    <property type="entry name" value="Nucleotide-bd_a/b_plait_sf"/>
</dbReference>
<dbReference type="InterPro" id="IPR035979">
    <property type="entry name" value="RBD_domain_sf"/>
</dbReference>
<dbReference type="InterPro" id="IPR034906">
    <property type="entry name" value="RCAN1_RRM"/>
</dbReference>
<dbReference type="PANTHER" id="PTHR10300">
    <property type="entry name" value="CALCIPRESSIN"/>
    <property type="match status" value="1"/>
</dbReference>
<dbReference type="PANTHER" id="PTHR10300:SF4">
    <property type="entry name" value="CALCIPRESSIN-1"/>
    <property type="match status" value="1"/>
</dbReference>
<dbReference type="Pfam" id="PF04847">
    <property type="entry name" value="Calcipressin"/>
    <property type="match status" value="1"/>
</dbReference>
<dbReference type="SUPFAM" id="SSF54928">
    <property type="entry name" value="RNA-binding domain, RBD"/>
    <property type="match status" value="1"/>
</dbReference>
<accession>P53805</accession>
<accession>D3DSF9</accession>
<accession>O00582</accession>
<accession>O00583</accession>
<accession>Q53XT0</accession>
<accession>Q6IBC6</accession>
<accession>Q7Z555</accession>
<accession>Q96R03</accession>
<accession>Q9BU69</accession>
<accession>Q9UF15</accession>
<accession>Q9UME4</accession>
<name>RCAN1_HUMAN</name>
<reference key="1">
    <citation type="journal article" date="1995" name="Hum. Mol. Genet.">
        <title>A new human gene from the Down syndrome critical region encodes a proline-rich protein highly expressed in fetal brain and heart.</title>
        <authorList>
            <person name="Fuentes J.-J."/>
            <person name="Pritchard M.A."/>
            <person name="Planas A.M."/>
            <person name="Bosch A."/>
            <person name="Ferrer I."/>
            <person name="Estivill X."/>
        </authorList>
    </citation>
    <scope>NUCLEOTIDE SEQUENCE [MRNA] (ISOFORMS 3 AND 4)</scope>
</reference>
<reference key="2">
    <citation type="journal article" date="1997" name="Genomics">
        <title>Genomic organization, alternative splicing, and expression patterns of the DSCR1 (Down syndrome candidate region 1) gene.</title>
        <authorList>
            <person name="Fuentes J.-J."/>
            <person name="Pritchard M.A."/>
            <person name="Estivill X."/>
        </authorList>
    </citation>
    <scope>NUCLEOTIDE SEQUENCE [MRNA] (ISOFORMS 2 AND 4)</scope>
    <scope>NUCLEOTIDE SEQUENCE [MRNA] OF 48-252 (ISOFORM 1)</scope>
    <scope>ALTERNATIVE SPLICING</scope>
</reference>
<reference key="3">
    <citation type="journal article" date="2003" name="Biochem. J.">
        <title>Phosphorylation of calcipressin 1 increases its ability to inhibit calcineurin and decreases calcipressin half-life.</title>
        <authorList>
            <person name="Genesca L."/>
            <person name="Aubareda A."/>
            <person name="Fuentes J.J."/>
            <person name="Estivill X."/>
            <person name="De La Luna S."/>
            <person name="Perez-Riba M."/>
        </authorList>
    </citation>
    <scope>NUCLEOTIDE SEQUENCE [MRNA] (ISOFORM 1)</scope>
    <scope>FUNCTION</scope>
    <scope>INTERACTION WITH PPP3CA AND PPP3R1</scope>
    <scope>PHOSPHORYLATION AT SER-163 AND SER-167</scope>
    <scope>MUTAGENESIS OF SER-163 AND SER-167</scope>
    <source>
        <tissue>Heart</tissue>
    </source>
</reference>
<reference key="4">
    <citation type="submission" date="2001-07" db="EMBL/GenBank/DDBJ databases">
        <authorList>
            <person name="Hua F."/>
            <person name="Wu J."/>
            <person name="Zhou Y."/>
            <person name="Zhang B."/>
            <person name="Peng X."/>
            <person name="Qiang B."/>
            <person name="Yuan J."/>
            <person name="Qiang B."/>
        </authorList>
    </citation>
    <scope>NUCLEOTIDE SEQUENCE [MRNA] (ISOFORM 3)</scope>
</reference>
<reference key="5">
    <citation type="journal article" date="2004" name="Nat. Genet.">
        <title>Complete sequencing and characterization of 21,243 full-length human cDNAs.</title>
        <authorList>
            <person name="Ota T."/>
            <person name="Suzuki Y."/>
            <person name="Nishikawa T."/>
            <person name="Otsuki T."/>
            <person name="Sugiyama T."/>
            <person name="Irie R."/>
            <person name="Wakamatsu A."/>
            <person name="Hayashi K."/>
            <person name="Sato H."/>
            <person name="Nagai K."/>
            <person name="Kimura K."/>
            <person name="Makita H."/>
            <person name="Sekine M."/>
            <person name="Obayashi M."/>
            <person name="Nishi T."/>
            <person name="Shibahara T."/>
            <person name="Tanaka T."/>
            <person name="Ishii S."/>
            <person name="Yamamoto J."/>
            <person name="Saito K."/>
            <person name="Kawai Y."/>
            <person name="Isono Y."/>
            <person name="Nakamura Y."/>
            <person name="Nagahari K."/>
            <person name="Murakami K."/>
            <person name="Yasuda T."/>
            <person name="Iwayanagi T."/>
            <person name="Wagatsuma M."/>
            <person name="Shiratori A."/>
            <person name="Sudo H."/>
            <person name="Hosoiri T."/>
            <person name="Kaku Y."/>
            <person name="Kodaira H."/>
            <person name="Kondo H."/>
            <person name="Sugawara M."/>
            <person name="Takahashi M."/>
            <person name="Kanda K."/>
            <person name="Yokoi T."/>
            <person name="Furuya T."/>
            <person name="Kikkawa E."/>
            <person name="Omura Y."/>
            <person name="Abe K."/>
            <person name="Kamihara K."/>
            <person name="Katsuta N."/>
            <person name="Sato K."/>
            <person name="Tanikawa M."/>
            <person name="Yamazaki M."/>
            <person name="Ninomiya K."/>
            <person name="Ishibashi T."/>
            <person name="Yamashita H."/>
            <person name="Murakawa K."/>
            <person name="Fujimori K."/>
            <person name="Tanai H."/>
            <person name="Kimata M."/>
            <person name="Watanabe M."/>
            <person name="Hiraoka S."/>
            <person name="Chiba Y."/>
            <person name="Ishida S."/>
            <person name="Ono Y."/>
            <person name="Takiguchi S."/>
            <person name="Watanabe S."/>
            <person name="Yosida M."/>
            <person name="Hotuta T."/>
            <person name="Kusano J."/>
            <person name="Kanehori K."/>
            <person name="Takahashi-Fujii A."/>
            <person name="Hara H."/>
            <person name="Tanase T.-O."/>
            <person name="Nomura Y."/>
            <person name="Togiya S."/>
            <person name="Komai F."/>
            <person name="Hara R."/>
            <person name="Takeuchi K."/>
            <person name="Arita M."/>
            <person name="Imose N."/>
            <person name="Musashino K."/>
            <person name="Yuuki H."/>
            <person name="Oshima A."/>
            <person name="Sasaki N."/>
            <person name="Aotsuka S."/>
            <person name="Yoshikawa Y."/>
            <person name="Matsunawa H."/>
            <person name="Ichihara T."/>
            <person name="Shiohata N."/>
            <person name="Sano S."/>
            <person name="Moriya S."/>
            <person name="Momiyama H."/>
            <person name="Satoh N."/>
            <person name="Takami S."/>
            <person name="Terashima Y."/>
            <person name="Suzuki O."/>
            <person name="Nakagawa S."/>
            <person name="Senoh A."/>
            <person name="Mizoguchi H."/>
            <person name="Goto Y."/>
            <person name="Shimizu F."/>
            <person name="Wakebe H."/>
            <person name="Hishigaki H."/>
            <person name="Watanabe T."/>
            <person name="Sugiyama A."/>
            <person name="Takemoto M."/>
            <person name="Kawakami B."/>
            <person name="Yamazaki M."/>
            <person name="Watanabe K."/>
            <person name="Kumagai A."/>
            <person name="Itakura S."/>
            <person name="Fukuzumi Y."/>
            <person name="Fujimori Y."/>
            <person name="Komiyama M."/>
            <person name="Tashiro H."/>
            <person name="Tanigami A."/>
            <person name="Fujiwara T."/>
            <person name="Ono T."/>
            <person name="Yamada K."/>
            <person name="Fujii Y."/>
            <person name="Ozaki K."/>
            <person name="Hirao M."/>
            <person name="Ohmori Y."/>
            <person name="Kawabata A."/>
            <person name="Hikiji T."/>
            <person name="Kobatake N."/>
            <person name="Inagaki H."/>
            <person name="Ikema Y."/>
            <person name="Okamoto S."/>
            <person name="Okitani R."/>
            <person name="Kawakami T."/>
            <person name="Noguchi S."/>
            <person name="Itoh T."/>
            <person name="Shigeta K."/>
            <person name="Senba T."/>
            <person name="Matsumura K."/>
            <person name="Nakajima Y."/>
            <person name="Mizuno T."/>
            <person name="Morinaga M."/>
            <person name="Sasaki M."/>
            <person name="Togashi T."/>
            <person name="Oyama M."/>
            <person name="Hata H."/>
            <person name="Watanabe M."/>
            <person name="Komatsu T."/>
            <person name="Mizushima-Sugano J."/>
            <person name="Satoh T."/>
            <person name="Shirai Y."/>
            <person name="Takahashi Y."/>
            <person name="Nakagawa K."/>
            <person name="Okumura K."/>
            <person name="Nagase T."/>
            <person name="Nomura N."/>
            <person name="Kikuchi H."/>
            <person name="Masuho Y."/>
            <person name="Yamashita R."/>
            <person name="Nakai K."/>
            <person name="Yada T."/>
            <person name="Nakamura Y."/>
            <person name="Ohara O."/>
            <person name="Isogai T."/>
            <person name="Sugano S."/>
        </authorList>
    </citation>
    <scope>NUCLEOTIDE SEQUENCE [LARGE SCALE MRNA] (ISOFORM 1)</scope>
</reference>
<reference key="6">
    <citation type="submission" date="2004-06" db="EMBL/GenBank/DDBJ databases">
        <title>Cloning of human full open reading frames in Gateway(TM) system entry vector (pDONR201).</title>
        <authorList>
            <person name="Ebert L."/>
            <person name="Schick M."/>
            <person name="Neubert P."/>
            <person name="Schatten R."/>
            <person name="Henze S."/>
            <person name="Korn B."/>
        </authorList>
    </citation>
    <scope>NUCLEOTIDE SEQUENCE [LARGE SCALE MRNA] (ISOFORM 3)</scope>
</reference>
<reference key="7">
    <citation type="journal article" date="2000" name="Nature">
        <title>The DNA sequence of human chromosome 21.</title>
        <authorList>
            <person name="Hattori M."/>
            <person name="Fujiyama A."/>
            <person name="Taylor T.D."/>
            <person name="Watanabe H."/>
            <person name="Yada T."/>
            <person name="Park H.-S."/>
            <person name="Toyoda A."/>
            <person name="Ishii K."/>
            <person name="Totoki Y."/>
            <person name="Choi D.-K."/>
            <person name="Groner Y."/>
            <person name="Soeda E."/>
            <person name="Ohki M."/>
            <person name="Takagi T."/>
            <person name="Sakaki Y."/>
            <person name="Taudien S."/>
            <person name="Blechschmidt K."/>
            <person name="Polley A."/>
            <person name="Menzel U."/>
            <person name="Delabar J."/>
            <person name="Kumpf K."/>
            <person name="Lehmann R."/>
            <person name="Patterson D."/>
            <person name="Reichwald K."/>
            <person name="Rump A."/>
            <person name="Schillhabel M."/>
            <person name="Schudy A."/>
            <person name="Zimmermann W."/>
            <person name="Rosenthal A."/>
            <person name="Kudoh J."/>
            <person name="Shibuya K."/>
            <person name="Kawasaki K."/>
            <person name="Asakawa S."/>
            <person name="Shintani A."/>
            <person name="Sasaki T."/>
            <person name="Nagamine K."/>
            <person name="Mitsuyama S."/>
            <person name="Antonarakis S.E."/>
            <person name="Minoshima S."/>
            <person name="Shimizu N."/>
            <person name="Nordsiek G."/>
            <person name="Hornischer K."/>
            <person name="Brandt P."/>
            <person name="Scharfe M."/>
            <person name="Schoen O."/>
            <person name="Desario A."/>
            <person name="Reichelt J."/>
            <person name="Kauer G."/>
            <person name="Bloecker H."/>
            <person name="Ramser J."/>
            <person name="Beck A."/>
            <person name="Klages S."/>
            <person name="Hennig S."/>
            <person name="Riesselmann L."/>
            <person name="Dagand E."/>
            <person name="Wehrmeyer S."/>
            <person name="Borzym K."/>
            <person name="Gardiner K."/>
            <person name="Nizetic D."/>
            <person name="Francis F."/>
            <person name="Lehrach H."/>
            <person name="Reinhardt R."/>
            <person name="Yaspo M.-L."/>
        </authorList>
    </citation>
    <scope>NUCLEOTIDE SEQUENCE [LARGE SCALE GENOMIC DNA]</scope>
</reference>
<reference key="8">
    <citation type="submission" date="2005-09" db="EMBL/GenBank/DDBJ databases">
        <authorList>
            <person name="Mural R.J."/>
            <person name="Istrail S."/>
            <person name="Sutton G.G."/>
            <person name="Florea L."/>
            <person name="Halpern A.L."/>
            <person name="Mobarry C.M."/>
            <person name="Lippert R."/>
            <person name="Walenz B."/>
            <person name="Shatkay H."/>
            <person name="Dew I."/>
            <person name="Miller J.R."/>
            <person name="Flanigan M.J."/>
            <person name="Edwards N.J."/>
            <person name="Bolanos R."/>
            <person name="Fasulo D."/>
            <person name="Halldorsson B.V."/>
            <person name="Hannenhalli S."/>
            <person name="Turner R."/>
            <person name="Yooseph S."/>
            <person name="Lu F."/>
            <person name="Nusskern D.R."/>
            <person name="Shue B.C."/>
            <person name="Zheng X.H."/>
            <person name="Zhong F."/>
            <person name="Delcher A.L."/>
            <person name="Huson D.H."/>
            <person name="Kravitz S.A."/>
            <person name="Mouchard L."/>
            <person name="Reinert K."/>
            <person name="Remington K.A."/>
            <person name="Clark A.G."/>
            <person name="Waterman M.S."/>
            <person name="Eichler E.E."/>
            <person name="Adams M.D."/>
            <person name="Hunkapiller M.W."/>
            <person name="Myers E.W."/>
            <person name="Venter J.C."/>
        </authorList>
    </citation>
    <scope>NUCLEOTIDE SEQUENCE [LARGE SCALE GENOMIC DNA]</scope>
</reference>
<reference key="9">
    <citation type="submission" date="1996-04" db="EMBL/GenBank/DDBJ databases">
        <title>Adapt78, a calcium and oxidant-inducible RNA.</title>
        <authorList>
            <person name="Crawford D.R."/>
            <person name="Leahy K.P."/>
            <person name="Davies K.J.A."/>
        </authorList>
    </citation>
    <scope>NUCLEOTIDE SEQUENCE [GENOMIC DNA] OF 1-219 (ISOFORM 2)</scope>
    <source>
        <tissue>Mammary gland</tissue>
    </source>
</reference>
<reference key="10">
    <citation type="journal article" date="2004" name="Genome Res.">
        <title>The status, quality, and expansion of the NIH full-length cDNA project: the Mammalian Gene Collection (MGC).</title>
        <authorList>
            <consortium name="The MGC Project Team"/>
        </authorList>
    </citation>
    <scope>NUCLEOTIDE SEQUENCE [LARGE SCALE MRNA] OF 38-252 (ISOFORM 1)</scope>
    <source>
        <tissue>Lung</tissue>
    </source>
</reference>
<reference key="11">
    <citation type="submission" date="2003-05" db="EMBL/GenBank/DDBJ databases">
        <title>Cloning of human full-length CDSs in BD Creator(TM) system donor vector.</title>
        <authorList>
            <person name="Kalnine N."/>
            <person name="Chen X."/>
            <person name="Rolfs A."/>
            <person name="Halleck A."/>
            <person name="Hines L."/>
            <person name="Eisenstein S."/>
            <person name="Koundinya M."/>
            <person name="Raphael J."/>
            <person name="Moreira D."/>
            <person name="Kelley T."/>
            <person name="LaBaer J."/>
            <person name="Lin Y."/>
            <person name="Phelan M."/>
            <person name="Farmer A."/>
        </authorList>
    </citation>
    <scope>NUCLEOTIDE SEQUENCE [LARGE SCALE MRNA] OF 56-252 (ISOFORM 1)</scope>
</reference>
<reference key="12">
    <citation type="journal article" date="2000" name="Hum. Mol. Genet.">
        <title>DSCR1, overexpressed in Down syndrome, is an inhibitor of calcineurin-mediated signaling pathways.</title>
        <authorList>
            <person name="Fuentes J.J."/>
            <person name="Genesca L."/>
            <person name="Kingsbury T.J."/>
            <person name="Cunningham K.W."/>
            <person name="Perez-Riba M."/>
            <person name="Estivill X."/>
            <person name="de la Luna S."/>
        </authorList>
    </citation>
    <scope>CHARACTERIZATION</scope>
</reference>
<reference key="13">
    <citation type="journal article" date="2005" name="Arch. Biochem. Biophys.">
        <title>Raf-1 is a binding partner of DSCR1.</title>
        <authorList>
            <person name="Cho Y.J."/>
            <person name="Abe M."/>
            <person name="Kim S.Y."/>
            <person name="Sato Y."/>
        </authorList>
    </citation>
    <scope>INTERACTION WITH RAF1</scope>
</reference>
<feature type="chain" id="PRO_0000211414" description="Calcipressin-1">
    <location>
        <begin position="1"/>
        <end position="252"/>
    </location>
</feature>
<feature type="region of interest" description="Disordered" evidence="2">
    <location>
        <begin position="219"/>
        <end position="252"/>
    </location>
</feature>
<feature type="compositionally biased region" description="Acidic residues" evidence="2">
    <location>
        <begin position="219"/>
        <end position="228"/>
    </location>
</feature>
<feature type="modified residue" description="Phosphoserine" evidence="3">
    <location>
        <position position="163"/>
    </location>
</feature>
<feature type="modified residue" description="Phosphoserine" evidence="3">
    <location>
        <position position="167"/>
    </location>
</feature>
<feature type="modified residue" description="Phosphoserine" evidence="1">
    <location>
        <position position="218"/>
    </location>
</feature>
<feature type="splice variant" id="VSP_001316" description="In isoform 4." evidence="6 7">
    <location>
        <begin position="1"/>
        <end position="135"/>
    </location>
</feature>
<feature type="splice variant" id="VSP_001315" description="In isoform 3." evidence="6 8 9">
    <original>MEDGVAGPQLGAAAEAAEAAEARARPGVTLRPFAPLSGAAEADEGGGDWSFIDCEMEEVDLQDLPSATIACHLDPRVFVDGLCR</original>
    <variation>MVY</variation>
    <location>
        <begin position="1"/>
        <end position="84"/>
    </location>
</feature>
<feature type="splice variant" id="VSP_001314" description="In isoform 2." evidence="7">
    <original>MEDGVAGPQLGAAAEAAEAAEARARPGVTLRPFAPLSGAAEADEGGGDWSFIDCEMEEVDLQDLPSATIACHLDPRVFVDGLC</original>
    <variation>MHFRNFNYSFSSLIACVANSDIFSESET</variation>
    <location>
        <begin position="1"/>
        <end position="83"/>
    </location>
</feature>
<feature type="mutagenesis site" description="Loss of phosphorylation, no loss of interaction with PPP3CA and PPP3R1, reduced ability to inhibit calcineurin and increased protein half-life; alone or when associated with A-167." evidence="3">
    <original>S</original>
    <variation>A</variation>
    <location>
        <position position="163"/>
    </location>
</feature>
<feature type="mutagenesis site" description="No loss of phosphorylation and no effect on protein half-life; alone or when associated with E-167." evidence="3">
    <original>S</original>
    <variation>E</variation>
    <location>
        <position position="163"/>
    </location>
</feature>
<feature type="mutagenesis site" description="Loss of phosphorylation, no loss of interaction with PPP3CA and PPP3R1, reduced ability to inhibit calcineurin and increased protein half-life; alone or when associated with A-163." evidence="3">
    <original>S</original>
    <variation>A</variation>
    <location>
        <position position="167"/>
    </location>
</feature>
<feature type="mutagenesis site" description="No loss of phosphorylation and no effect on protein half-life; alone or when associated with E-163." evidence="3">
    <original>S</original>
    <variation>E</variation>
    <location>
        <position position="167"/>
    </location>
</feature>
<feature type="sequence conflict" description="In Ref. 3; AAK92478." evidence="10" ref="3">
    <original>H</original>
    <variation>R</variation>
    <location>
        <position position="202"/>
    </location>
</feature>
<feature type="sequence conflict" description="In Ref. 7; AAF21218." evidence="10" ref="7">
    <original>H</original>
    <variation>Q</variation>
    <location>
        <position position="214"/>
    </location>
</feature>
<feature type="strand" evidence="11">
    <location>
        <begin position="210"/>
        <end position="214"/>
    </location>
</feature>
<sequence>MEDGVAGPQLGAAAEAAEAAEARARPGVTLRPFAPLSGAAEADEGGGDWSFIDCEMEEVDLQDLPSATIACHLDPRVFVDGLCRAKFESLFRTYDKDITFQYFKSFKRVRINFSNPFSAADARLQLHKTEFLGKEMKLYFAQTLHIGSSHLAPPNPDKQFLISPPASPPVGWKQVEDATPVINYDLLYAISKLGPGEKYELHAATDTTPSVVVHVCESDQEKEEEEEMERMRRPKPKIIQTRRPEYTPIHLS</sequence>
<evidence type="ECO:0000250" key="1">
    <source>
        <dbReference type="UniProtKB" id="Q9JHG6"/>
    </source>
</evidence>
<evidence type="ECO:0000256" key="2">
    <source>
        <dbReference type="SAM" id="MobiDB-lite"/>
    </source>
</evidence>
<evidence type="ECO:0000269" key="3">
    <source>
    </source>
</evidence>
<evidence type="ECO:0000269" key="4">
    <source>
    </source>
</evidence>
<evidence type="ECO:0000303" key="5">
    <source>
    </source>
</evidence>
<evidence type="ECO:0000303" key="6">
    <source>
    </source>
</evidence>
<evidence type="ECO:0000303" key="7">
    <source>
    </source>
</evidence>
<evidence type="ECO:0000303" key="8">
    <source ref="4"/>
</evidence>
<evidence type="ECO:0000303" key="9">
    <source ref="6"/>
</evidence>
<evidence type="ECO:0000305" key="10"/>
<evidence type="ECO:0007829" key="11">
    <source>
        <dbReference type="PDB" id="6UUQ"/>
    </source>
</evidence>